<evidence type="ECO:0000255" key="1">
    <source>
        <dbReference type="HAMAP-Rule" id="MF_01179"/>
    </source>
</evidence>
<gene>
    <name evidence="1" type="primary">sulA</name>
    <name type="ordered locus">SG0961</name>
</gene>
<protein>
    <recommendedName>
        <fullName evidence="1">Cell division inhibitor SulA</fullName>
    </recommendedName>
</protein>
<accession>B5R6C4</accession>
<sequence>MYTSGYANRSSSFPTTTHNAALTATENAAAGLVSEVVYHEDQPMMAQLLLLPLLRQLGQQSRWQLWLTPQQKLSREWVQSSGLPLTKVMQISQLAPRHTLESMIRALRTGNYSVVIGWMTEELTEEEHASLVEAAKVGNAVGFIMRPVRAHALSRRQHSGLKIHSNLYH</sequence>
<name>SULA_SALG2</name>
<organism>
    <name type="scientific">Salmonella gallinarum (strain 287/91 / NCTC 13346)</name>
    <dbReference type="NCBI Taxonomy" id="550538"/>
    <lineage>
        <taxon>Bacteria</taxon>
        <taxon>Pseudomonadati</taxon>
        <taxon>Pseudomonadota</taxon>
        <taxon>Gammaproteobacteria</taxon>
        <taxon>Enterobacterales</taxon>
        <taxon>Enterobacteriaceae</taxon>
        <taxon>Salmonella</taxon>
    </lineage>
</organism>
<dbReference type="EMBL" id="AM933173">
    <property type="protein sequence ID" value="CAR36851.1"/>
    <property type="molecule type" value="Genomic_DNA"/>
</dbReference>
<dbReference type="RefSeq" id="WP_000288726.1">
    <property type="nucleotide sequence ID" value="NC_011274.1"/>
</dbReference>
<dbReference type="SMR" id="B5R6C4"/>
<dbReference type="KEGG" id="seg:SG0961"/>
<dbReference type="HOGENOM" id="CLU_118972_1_0_6"/>
<dbReference type="Proteomes" id="UP000008321">
    <property type="component" value="Chromosome"/>
</dbReference>
<dbReference type="GO" id="GO:0000917">
    <property type="term" value="P:division septum assembly"/>
    <property type="evidence" value="ECO:0007669"/>
    <property type="project" value="UniProtKB-KW"/>
</dbReference>
<dbReference type="GO" id="GO:0006281">
    <property type="term" value="P:DNA repair"/>
    <property type="evidence" value="ECO:0007669"/>
    <property type="project" value="TreeGrafter"/>
</dbReference>
<dbReference type="GO" id="GO:0051782">
    <property type="term" value="P:negative regulation of cell division"/>
    <property type="evidence" value="ECO:0007669"/>
    <property type="project" value="UniProtKB-UniRule"/>
</dbReference>
<dbReference type="GO" id="GO:0009432">
    <property type="term" value="P:SOS response"/>
    <property type="evidence" value="ECO:0007669"/>
    <property type="project" value="UniProtKB-UniRule"/>
</dbReference>
<dbReference type="FunFam" id="3.40.50.300:FF:000417">
    <property type="entry name" value="Cell division inhibitor SulA"/>
    <property type="match status" value="1"/>
</dbReference>
<dbReference type="Gene3D" id="3.40.50.300">
    <property type="entry name" value="P-loop containing nucleotide triphosphate hydrolases"/>
    <property type="match status" value="1"/>
</dbReference>
<dbReference type="HAMAP" id="MF_01179">
    <property type="entry name" value="SulA"/>
    <property type="match status" value="1"/>
</dbReference>
<dbReference type="InterPro" id="IPR004596">
    <property type="entry name" value="Cell_div_suppressor_SulA"/>
</dbReference>
<dbReference type="InterPro" id="IPR027417">
    <property type="entry name" value="P-loop_NTPase"/>
</dbReference>
<dbReference type="InterPro" id="IPR050356">
    <property type="entry name" value="SulA_CellDiv_inhibitor"/>
</dbReference>
<dbReference type="InterPro" id="IPR047696">
    <property type="entry name" value="SulA_enterobact"/>
</dbReference>
<dbReference type="NCBIfam" id="NF007892">
    <property type="entry name" value="PRK10595.1"/>
    <property type="match status" value="1"/>
</dbReference>
<dbReference type="NCBIfam" id="TIGR00623">
    <property type="entry name" value="SOS_SulA_coli"/>
    <property type="match status" value="1"/>
</dbReference>
<dbReference type="PANTHER" id="PTHR35369">
    <property type="entry name" value="BLR3025 PROTEIN-RELATED"/>
    <property type="match status" value="1"/>
</dbReference>
<dbReference type="PANTHER" id="PTHR35369:SF4">
    <property type="entry name" value="CELL DIVISION INHIBITOR SULA"/>
    <property type="match status" value="1"/>
</dbReference>
<dbReference type="Pfam" id="PF03846">
    <property type="entry name" value="SulA"/>
    <property type="match status" value="1"/>
</dbReference>
<dbReference type="PIRSF" id="PIRSF003093">
    <property type="entry name" value="SulA"/>
    <property type="match status" value="1"/>
</dbReference>
<dbReference type="SUPFAM" id="SSF52540">
    <property type="entry name" value="P-loop containing nucleoside triphosphate hydrolases"/>
    <property type="match status" value="1"/>
</dbReference>
<keyword id="KW-0131">Cell cycle</keyword>
<keyword id="KW-0132">Cell division</keyword>
<keyword id="KW-0227">DNA damage</keyword>
<keyword id="KW-0717">Septation</keyword>
<keyword id="KW-0742">SOS response</keyword>
<proteinExistence type="inferred from homology"/>
<comment type="function">
    <text evidence="1">Component of the SOS system and an inhibitor of cell division. Accumulation of SulA causes rapid cessation of cell division and the appearance of long, non-septate filaments. In the presence of GTP, binds a polymerization-competent form of FtsZ in a 1:1 ratio, thus inhibiting FtsZ polymerization and therefore preventing it from participating in the assembly of the Z ring. This mechanism prevents the premature segregation of damaged DNA to daughter cells during cell division.</text>
</comment>
<comment type="subunit">
    <text evidence="1">Interacts with FtsZ.</text>
</comment>
<comment type="induction">
    <text evidence="1">By DNA damage, as part of the SOS response.</text>
</comment>
<comment type="PTM">
    <text evidence="1">Is rapidly cleaved and degraded by the Lon protease once DNA damage is repaired.</text>
</comment>
<comment type="similarity">
    <text evidence="1">Belongs to the SulA family.</text>
</comment>
<reference key="1">
    <citation type="journal article" date="2008" name="Genome Res.">
        <title>Comparative genome analysis of Salmonella enteritidis PT4 and Salmonella gallinarum 287/91 provides insights into evolutionary and host adaptation pathways.</title>
        <authorList>
            <person name="Thomson N.R."/>
            <person name="Clayton D.J."/>
            <person name="Windhorst D."/>
            <person name="Vernikos G."/>
            <person name="Davidson S."/>
            <person name="Churcher C."/>
            <person name="Quail M.A."/>
            <person name="Stevens M."/>
            <person name="Jones M.A."/>
            <person name="Watson M."/>
            <person name="Barron A."/>
            <person name="Layton A."/>
            <person name="Pickard D."/>
            <person name="Kingsley R.A."/>
            <person name="Bignell A."/>
            <person name="Clark L."/>
            <person name="Harris B."/>
            <person name="Ormond D."/>
            <person name="Abdellah Z."/>
            <person name="Brooks K."/>
            <person name="Cherevach I."/>
            <person name="Chillingworth T."/>
            <person name="Woodward J."/>
            <person name="Norberczak H."/>
            <person name="Lord A."/>
            <person name="Arrowsmith C."/>
            <person name="Jagels K."/>
            <person name="Moule S."/>
            <person name="Mungall K."/>
            <person name="Saunders M."/>
            <person name="Whitehead S."/>
            <person name="Chabalgoity J.A."/>
            <person name="Maskell D."/>
            <person name="Humphreys T."/>
            <person name="Roberts M."/>
            <person name="Barrow P.A."/>
            <person name="Dougan G."/>
            <person name="Parkhill J."/>
        </authorList>
    </citation>
    <scope>NUCLEOTIDE SEQUENCE [LARGE SCALE GENOMIC DNA]</scope>
    <source>
        <strain>287/91 / NCTC 13346</strain>
    </source>
</reference>
<feature type="chain" id="PRO_1000138167" description="Cell division inhibitor SulA">
    <location>
        <begin position="1"/>
        <end position="169"/>
    </location>
</feature>
<feature type="region of interest" description="FtsZ binding" evidence="1">
    <location>
        <begin position="106"/>
        <end position="112"/>
    </location>
</feature>
<feature type="region of interest" description="Lon protease binding" evidence="1">
    <location>
        <begin position="162"/>
        <end position="169"/>
    </location>
</feature>
<feature type="site" description="Essential for degradation by Lon protease" evidence="1">
    <location>
        <position position="169"/>
    </location>
</feature>